<gene>
    <name evidence="1" type="primary">gatC</name>
    <name type="ordered locus">Mlut_05980</name>
</gene>
<keyword id="KW-0067">ATP-binding</keyword>
<keyword id="KW-0436">Ligase</keyword>
<keyword id="KW-0547">Nucleotide-binding</keyword>
<keyword id="KW-0648">Protein biosynthesis</keyword>
<keyword id="KW-1185">Reference proteome</keyword>
<dbReference type="EC" id="6.3.5.-" evidence="1"/>
<dbReference type="EMBL" id="CP001628">
    <property type="protein sequence ID" value="ACS30135.1"/>
    <property type="molecule type" value="Genomic_DNA"/>
</dbReference>
<dbReference type="RefSeq" id="WP_002854348.1">
    <property type="nucleotide sequence ID" value="NZ_WBMF01000087.1"/>
</dbReference>
<dbReference type="SMR" id="C5C9I3"/>
<dbReference type="STRING" id="465515.Mlut_05980"/>
<dbReference type="EnsemblBacteria" id="ACS30135">
    <property type="protein sequence ID" value="ACS30135"/>
    <property type="gene ID" value="Mlut_05980"/>
</dbReference>
<dbReference type="GeneID" id="93363174"/>
<dbReference type="KEGG" id="mlu:Mlut_05980"/>
<dbReference type="eggNOG" id="COG0721">
    <property type="taxonomic scope" value="Bacteria"/>
</dbReference>
<dbReference type="HOGENOM" id="CLU_105899_1_2_11"/>
<dbReference type="Proteomes" id="UP000000738">
    <property type="component" value="Chromosome"/>
</dbReference>
<dbReference type="GO" id="GO:0050566">
    <property type="term" value="F:asparaginyl-tRNA synthase (glutamine-hydrolyzing) activity"/>
    <property type="evidence" value="ECO:0007669"/>
    <property type="project" value="RHEA"/>
</dbReference>
<dbReference type="GO" id="GO:0005524">
    <property type="term" value="F:ATP binding"/>
    <property type="evidence" value="ECO:0007669"/>
    <property type="project" value="UniProtKB-KW"/>
</dbReference>
<dbReference type="GO" id="GO:0050567">
    <property type="term" value="F:glutaminyl-tRNA synthase (glutamine-hydrolyzing) activity"/>
    <property type="evidence" value="ECO:0007669"/>
    <property type="project" value="UniProtKB-UniRule"/>
</dbReference>
<dbReference type="GO" id="GO:0070681">
    <property type="term" value="P:glutaminyl-tRNAGln biosynthesis via transamidation"/>
    <property type="evidence" value="ECO:0007669"/>
    <property type="project" value="TreeGrafter"/>
</dbReference>
<dbReference type="GO" id="GO:0006450">
    <property type="term" value="P:regulation of translational fidelity"/>
    <property type="evidence" value="ECO:0007669"/>
    <property type="project" value="InterPro"/>
</dbReference>
<dbReference type="GO" id="GO:0006412">
    <property type="term" value="P:translation"/>
    <property type="evidence" value="ECO:0007669"/>
    <property type="project" value="UniProtKB-UniRule"/>
</dbReference>
<dbReference type="Gene3D" id="1.10.20.60">
    <property type="entry name" value="Glu-tRNAGln amidotransferase C subunit, N-terminal domain"/>
    <property type="match status" value="1"/>
</dbReference>
<dbReference type="HAMAP" id="MF_00122">
    <property type="entry name" value="GatC"/>
    <property type="match status" value="1"/>
</dbReference>
<dbReference type="InterPro" id="IPR036113">
    <property type="entry name" value="Asp/Glu-ADT_sf_sub_c"/>
</dbReference>
<dbReference type="InterPro" id="IPR003837">
    <property type="entry name" value="GatC"/>
</dbReference>
<dbReference type="NCBIfam" id="TIGR00135">
    <property type="entry name" value="gatC"/>
    <property type="match status" value="1"/>
</dbReference>
<dbReference type="PANTHER" id="PTHR15004">
    <property type="entry name" value="GLUTAMYL-TRNA(GLN) AMIDOTRANSFERASE SUBUNIT C, MITOCHONDRIAL"/>
    <property type="match status" value="1"/>
</dbReference>
<dbReference type="PANTHER" id="PTHR15004:SF0">
    <property type="entry name" value="GLUTAMYL-TRNA(GLN) AMIDOTRANSFERASE SUBUNIT C, MITOCHONDRIAL"/>
    <property type="match status" value="1"/>
</dbReference>
<dbReference type="Pfam" id="PF02686">
    <property type="entry name" value="GatC"/>
    <property type="match status" value="1"/>
</dbReference>
<dbReference type="SUPFAM" id="SSF141000">
    <property type="entry name" value="Glu-tRNAGln amidotransferase C subunit"/>
    <property type="match status" value="1"/>
</dbReference>
<accession>C5C9I3</accession>
<sequence length="98" mass="10720">MPEITRDQVEHLARLAHIRMTDEELDTMSGDLEKILEHVSAVQAAAGDDVTPTSHPIALENVFREDVPAGMLTQEEALDQAPDSEDGQFKVPAILDGE</sequence>
<name>GATC_MICLC</name>
<comment type="function">
    <text evidence="1">Allows the formation of correctly charged Asn-tRNA(Asn) or Gln-tRNA(Gln) through the transamidation of misacylated Asp-tRNA(Asn) or Glu-tRNA(Gln) in organisms which lack either or both of asparaginyl-tRNA or glutaminyl-tRNA synthetases. The reaction takes place in the presence of glutamine and ATP through an activated phospho-Asp-tRNA(Asn) or phospho-Glu-tRNA(Gln).</text>
</comment>
<comment type="catalytic activity">
    <reaction evidence="1">
        <text>L-glutamyl-tRNA(Gln) + L-glutamine + ATP + H2O = L-glutaminyl-tRNA(Gln) + L-glutamate + ADP + phosphate + H(+)</text>
        <dbReference type="Rhea" id="RHEA:17521"/>
        <dbReference type="Rhea" id="RHEA-COMP:9681"/>
        <dbReference type="Rhea" id="RHEA-COMP:9684"/>
        <dbReference type="ChEBI" id="CHEBI:15377"/>
        <dbReference type="ChEBI" id="CHEBI:15378"/>
        <dbReference type="ChEBI" id="CHEBI:29985"/>
        <dbReference type="ChEBI" id="CHEBI:30616"/>
        <dbReference type="ChEBI" id="CHEBI:43474"/>
        <dbReference type="ChEBI" id="CHEBI:58359"/>
        <dbReference type="ChEBI" id="CHEBI:78520"/>
        <dbReference type="ChEBI" id="CHEBI:78521"/>
        <dbReference type="ChEBI" id="CHEBI:456216"/>
    </reaction>
</comment>
<comment type="catalytic activity">
    <reaction evidence="1">
        <text>L-aspartyl-tRNA(Asn) + L-glutamine + ATP + H2O = L-asparaginyl-tRNA(Asn) + L-glutamate + ADP + phosphate + 2 H(+)</text>
        <dbReference type="Rhea" id="RHEA:14513"/>
        <dbReference type="Rhea" id="RHEA-COMP:9674"/>
        <dbReference type="Rhea" id="RHEA-COMP:9677"/>
        <dbReference type="ChEBI" id="CHEBI:15377"/>
        <dbReference type="ChEBI" id="CHEBI:15378"/>
        <dbReference type="ChEBI" id="CHEBI:29985"/>
        <dbReference type="ChEBI" id="CHEBI:30616"/>
        <dbReference type="ChEBI" id="CHEBI:43474"/>
        <dbReference type="ChEBI" id="CHEBI:58359"/>
        <dbReference type="ChEBI" id="CHEBI:78515"/>
        <dbReference type="ChEBI" id="CHEBI:78516"/>
        <dbReference type="ChEBI" id="CHEBI:456216"/>
    </reaction>
</comment>
<comment type="subunit">
    <text evidence="1">Heterotrimer of A, B and C subunits.</text>
</comment>
<comment type="similarity">
    <text evidence="1">Belongs to the GatC family.</text>
</comment>
<organism>
    <name type="scientific">Micrococcus luteus (strain ATCC 4698 / DSM 20030 / JCM 1464 / CCM 169 / CCUG 5858 / IAM 1056 / NBRC 3333 / NCIMB 9278 / NCTC 2665 / VKM Ac-2230)</name>
    <name type="common">Micrococcus lysodeikticus</name>
    <dbReference type="NCBI Taxonomy" id="465515"/>
    <lineage>
        <taxon>Bacteria</taxon>
        <taxon>Bacillati</taxon>
        <taxon>Actinomycetota</taxon>
        <taxon>Actinomycetes</taxon>
        <taxon>Micrococcales</taxon>
        <taxon>Micrococcaceae</taxon>
        <taxon>Micrococcus</taxon>
    </lineage>
</organism>
<feature type="chain" id="PRO_1000203074" description="Aspartyl/glutamyl-tRNA(Asn/Gln) amidotransferase subunit C">
    <location>
        <begin position="1"/>
        <end position="98"/>
    </location>
</feature>
<reference key="1">
    <citation type="journal article" date="2010" name="J. Bacteriol.">
        <title>Genome sequence of the Fleming strain of Micrococcus luteus, a simple free-living actinobacterium.</title>
        <authorList>
            <person name="Young M."/>
            <person name="Artsatbanov V."/>
            <person name="Beller H.R."/>
            <person name="Chandra G."/>
            <person name="Chater K.F."/>
            <person name="Dover L.G."/>
            <person name="Goh E.B."/>
            <person name="Kahan T."/>
            <person name="Kaprelyants A.S."/>
            <person name="Kyrpides N."/>
            <person name="Lapidus A."/>
            <person name="Lowry S.R."/>
            <person name="Lykidis A."/>
            <person name="Mahillon J."/>
            <person name="Markowitz V."/>
            <person name="Mavromatis K."/>
            <person name="Mukamolova G.V."/>
            <person name="Oren A."/>
            <person name="Rokem J.S."/>
            <person name="Smith M.C."/>
            <person name="Young D.I."/>
            <person name="Greenblatt C.L."/>
        </authorList>
    </citation>
    <scope>NUCLEOTIDE SEQUENCE [LARGE SCALE GENOMIC DNA]</scope>
    <source>
        <strain>ATCC 4698 / DSM 20030 / JCM 1464 / CCM 169 / CCUG 5858 / IAM 1056 / NBRC 3333 / NCIMB 9278 / NCTC 2665 / VKM Ac-2230</strain>
    </source>
</reference>
<protein>
    <recommendedName>
        <fullName evidence="1">Aspartyl/glutamyl-tRNA(Asn/Gln) amidotransferase subunit C</fullName>
        <shortName evidence="1">Asp/Glu-ADT subunit C</shortName>
        <ecNumber evidence="1">6.3.5.-</ecNumber>
    </recommendedName>
</protein>
<evidence type="ECO:0000255" key="1">
    <source>
        <dbReference type="HAMAP-Rule" id="MF_00122"/>
    </source>
</evidence>
<proteinExistence type="inferred from homology"/>